<feature type="chain" id="PRO_0000416826" description="Sperm microtubule associated protein 2-like">
    <location>
        <begin position="1"/>
        <end position="465"/>
    </location>
</feature>
<feature type="repeat" description="THEG 1">
    <location>
        <begin position="174"/>
        <end position="192"/>
    </location>
</feature>
<feature type="repeat" description="THEG 2">
    <location>
        <begin position="214"/>
        <end position="233"/>
    </location>
</feature>
<feature type="repeat" description="THEG 3">
    <location>
        <begin position="260"/>
        <end position="279"/>
    </location>
</feature>
<feature type="repeat" description="THEG 4">
    <location>
        <begin position="297"/>
        <end position="316"/>
    </location>
</feature>
<feature type="repeat" description="THEG 5">
    <location>
        <begin position="333"/>
        <end position="352"/>
    </location>
</feature>
<feature type="repeat" description="THEG 6">
    <location>
        <begin position="373"/>
        <end position="392"/>
    </location>
</feature>
<feature type="repeat" description="THEG 7">
    <location>
        <begin position="409"/>
        <end position="428"/>
    </location>
</feature>
<feature type="repeat" description="THEG 8">
    <location>
        <begin position="446"/>
        <end position="465"/>
    </location>
</feature>
<feature type="region of interest" description="Disordered" evidence="1">
    <location>
        <begin position="1"/>
        <end position="140"/>
    </location>
</feature>
<feature type="compositionally biased region" description="Polar residues" evidence="1">
    <location>
        <begin position="1"/>
        <end position="29"/>
    </location>
</feature>
<feature type="compositionally biased region" description="Basic and acidic residues" evidence="1">
    <location>
        <begin position="40"/>
        <end position="70"/>
    </location>
</feature>
<feature type="compositionally biased region" description="Basic and acidic residues" evidence="1">
    <location>
        <begin position="114"/>
        <end position="137"/>
    </location>
</feature>
<feature type="sequence conflict" description="In Ref. 1; DW009623." evidence="2" ref="1">
    <original>L</original>
    <variation>Q</variation>
    <location>
        <position position="220"/>
    </location>
</feature>
<accession>P0DJG4</accession>
<proteinExistence type="evidence at protein level"/>
<evidence type="ECO:0000256" key="1">
    <source>
        <dbReference type="SAM" id="MobiDB-lite"/>
    </source>
</evidence>
<evidence type="ECO:0000305" key="2"/>
<evidence type="ECO:0000312" key="3">
    <source>
        <dbReference type="HGNC" id="HGNC:43771"/>
    </source>
</evidence>
<sequence>MENQEFLSSSAPSEVTDGQVSTEISTCSEVFQKPIVLRILDTHRELEESEDPEKHENPEEPEEVREQDQRDESEECDEPHESYEPHAPYAPHKPRDSYAPYELHGPHAAPKLLKAREPRQLRHTREPRKSREAKETELLPSAAVMISPSLITRAPPRPQLSFLGANPVSCDFVRKCFSSRKRTPNLSKPKKQWGTPDRKLFWGNQDPIRPVSQGALKAQLTKRLENLAQPKEVSCHYVPNRAQYYHSCGRESVIWEITPPALFRQPSKRIQRLSQPNGFKRQCLLNRPFSDNSARDSLRISDPSPRILQLSVAKGTDPNYHPSKKMQTKISLSTLSAIATPRIIELAHPRIKLEGLCYERQRSELPIRPVPPAAMIAKPSPRTIALAKSKSVHQDYLPDRDAHWPVSYATTHSKASPRIQELANPNKRAPVRIVYYDPDVFKTKPAALKAQCSQRIWELSQPLTR</sequence>
<name>SMA2L_HUMAN</name>
<protein>
    <recommendedName>
        <fullName evidence="3">Sperm microtubule associated protein 2-like</fullName>
    </recommendedName>
    <alternativeName>
        <fullName>Testicular haploid expressed gene protein-like</fullName>
    </alternativeName>
    <alternativeName>
        <fullName>Theg spermatid-like protein</fullName>
    </alternativeName>
</protein>
<keyword id="KW-1267">Proteomics identification</keyword>
<keyword id="KW-1185">Reference proteome</keyword>
<keyword id="KW-0677">Repeat</keyword>
<organism>
    <name type="scientific">Homo sapiens</name>
    <name type="common">Human</name>
    <dbReference type="NCBI Taxonomy" id="9606"/>
    <lineage>
        <taxon>Eukaryota</taxon>
        <taxon>Metazoa</taxon>
        <taxon>Chordata</taxon>
        <taxon>Craniata</taxon>
        <taxon>Vertebrata</taxon>
        <taxon>Euteleostomi</taxon>
        <taxon>Mammalia</taxon>
        <taxon>Eutheria</taxon>
        <taxon>Euarchontoglires</taxon>
        <taxon>Primates</taxon>
        <taxon>Haplorrhini</taxon>
        <taxon>Catarrhini</taxon>
        <taxon>Hominidae</taxon>
        <taxon>Homo</taxon>
    </lineage>
</organism>
<gene>
    <name evidence="3" type="primary">SPMAP2L</name>
    <name type="synonym">THEGL</name>
</gene>
<reference key="1">
    <citation type="journal article" date="2005" name="Nature">
        <title>Generation and annotation of the DNA sequences of human chromosomes 2 and 4.</title>
        <authorList>
            <person name="Hillier L.W."/>
            <person name="Graves T.A."/>
            <person name="Fulton R.S."/>
            <person name="Fulton L.A."/>
            <person name="Pepin K.H."/>
            <person name="Minx P."/>
            <person name="Wagner-McPherson C."/>
            <person name="Layman D."/>
            <person name="Wylie K."/>
            <person name="Sekhon M."/>
            <person name="Becker M.C."/>
            <person name="Fewell G.A."/>
            <person name="Delehaunty K.D."/>
            <person name="Miner T.L."/>
            <person name="Nash W.E."/>
            <person name="Kremitzki C."/>
            <person name="Oddy L."/>
            <person name="Du H."/>
            <person name="Sun H."/>
            <person name="Bradshaw-Cordum H."/>
            <person name="Ali J."/>
            <person name="Carter J."/>
            <person name="Cordes M."/>
            <person name="Harris A."/>
            <person name="Isak A."/>
            <person name="van Brunt A."/>
            <person name="Nguyen C."/>
            <person name="Du F."/>
            <person name="Courtney L."/>
            <person name="Kalicki J."/>
            <person name="Ozersky P."/>
            <person name="Abbott S."/>
            <person name="Armstrong J."/>
            <person name="Belter E.A."/>
            <person name="Caruso L."/>
            <person name="Cedroni M."/>
            <person name="Cotton M."/>
            <person name="Davidson T."/>
            <person name="Desai A."/>
            <person name="Elliott G."/>
            <person name="Erb T."/>
            <person name="Fronick C."/>
            <person name="Gaige T."/>
            <person name="Haakenson W."/>
            <person name="Haglund K."/>
            <person name="Holmes A."/>
            <person name="Harkins R."/>
            <person name="Kim K."/>
            <person name="Kruchowski S.S."/>
            <person name="Strong C.M."/>
            <person name="Grewal N."/>
            <person name="Goyea E."/>
            <person name="Hou S."/>
            <person name="Levy A."/>
            <person name="Martinka S."/>
            <person name="Mead K."/>
            <person name="McLellan M.D."/>
            <person name="Meyer R."/>
            <person name="Randall-Maher J."/>
            <person name="Tomlinson C."/>
            <person name="Dauphin-Kohlberg S."/>
            <person name="Kozlowicz-Reilly A."/>
            <person name="Shah N."/>
            <person name="Swearengen-Shahid S."/>
            <person name="Snider J."/>
            <person name="Strong J.T."/>
            <person name="Thompson J."/>
            <person name="Yoakum M."/>
            <person name="Leonard S."/>
            <person name="Pearman C."/>
            <person name="Trani L."/>
            <person name="Radionenko M."/>
            <person name="Waligorski J.E."/>
            <person name="Wang C."/>
            <person name="Rock S.M."/>
            <person name="Tin-Wollam A.-M."/>
            <person name="Maupin R."/>
            <person name="Latreille P."/>
            <person name="Wendl M.C."/>
            <person name="Yang S.-P."/>
            <person name="Pohl C."/>
            <person name="Wallis J.W."/>
            <person name="Spieth J."/>
            <person name="Bieri T.A."/>
            <person name="Berkowicz N."/>
            <person name="Nelson J.O."/>
            <person name="Osborne J."/>
            <person name="Ding L."/>
            <person name="Meyer R."/>
            <person name="Sabo A."/>
            <person name="Shotland Y."/>
            <person name="Sinha P."/>
            <person name="Wohldmann P.E."/>
            <person name="Cook L.L."/>
            <person name="Hickenbotham M.T."/>
            <person name="Eldred J."/>
            <person name="Williams D."/>
            <person name="Jones T.A."/>
            <person name="She X."/>
            <person name="Ciccarelli F.D."/>
            <person name="Izaurralde E."/>
            <person name="Taylor J."/>
            <person name="Schmutz J."/>
            <person name="Myers R.M."/>
            <person name="Cox D.R."/>
            <person name="Huang X."/>
            <person name="McPherson J.D."/>
            <person name="Mardis E.R."/>
            <person name="Clifton S.W."/>
            <person name="Warren W.C."/>
            <person name="Chinwalla A.T."/>
            <person name="Eddy S.R."/>
            <person name="Marra M.A."/>
            <person name="Ovcharenko I."/>
            <person name="Furey T.S."/>
            <person name="Miller W."/>
            <person name="Eichler E.E."/>
            <person name="Bork P."/>
            <person name="Suyama M."/>
            <person name="Torrents D."/>
            <person name="Waterston R.H."/>
            <person name="Wilson R.K."/>
        </authorList>
    </citation>
    <scope>NUCLEOTIDE SEQUENCE [LARGE SCALE GENOMIC DNA]</scope>
</reference>
<reference key="2">
    <citation type="submission" date="2005-12" db="EMBL/GenBank/DDBJ databases">
        <title>Exhaustive RT-PCR and sequencing of all novel TWINSCAN predictions in human.</title>
        <authorList>
            <person name="Stevens M."/>
            <person name="Wei C."/>
            <person name="Gross S.S."/>
            <person name="McPherson J."/>
            <person name="Brent M.R."/>
        </authorList>
    </citation>
    <scope>NUCLEOTIDE SEQUENCE [LARGE SCALE MRNA] OF 85-314 AND 315-443</scope>
</reference>
<dbReference type="EMBL" id="AC108215">
    <property type="status" value="NOT_ANNOTATED_CDS"/>
    <property type="molecule type" value="Genomic_DNA"/>
</dbReference>
<dbReference type="EMBL" id="DY655427">
    <property type="status" value="NOT_ANNOTATED_CDS"/>
    <property type="molecule type" value="mRNA"/>
</dbReference>
<dbReference type="EMBL" id="DW009623">
    <property type="status" value="NOT_ANNOTATED_CDS"/>
    <property type="molecule type" value="mRNA"/>
</dbReference>
<dbReference type="CCDS" id="CCDS58899.1"/>
<dbReference type="RefSeq" id="NP_001243404.1">
    <property type="nucleotide sequence ID" value="NM_001256475.2"/>
</dbReference>
<dbReference type="SMR" id="P0DJG4"/>
<dbReference type="BioGRID" id="1528470">
    <property type="interactions" value="1"/>
</dbReference>
<dbReference type="FunCoup" id="P0DJG4">
    <property type="interactions" value="4"/>
</dbReference>
<dbReference type="STRING" id="9606.ENSP00000456850"/>
<dbReference type="iPTMnet" id="P0DJG4"/>
<dbReference type="PhosphoSitePlus" id="P0DJG4"/>
<dbReference type="BioMuta" id="THEGL"/>
<dbReference type="DMDM" id="384951201"/>
<dbReference type="MassIVE" id="P0DJG4"/>
<dbReference type="PaxDb" id="9606-ENSP00000456850"/>
<dbReference type="PeptideAtlas" id="P0DJG4"/>
<dbReference type="ProteomicsDB" id="52547"/>
<dbReference type="Antibodypedia" id="76754">
    <property type="antibodies" value="6 antibodies from 4 providers"/>
</dbReference>
<dbReference type="DNASU" id="100506564"/>
<dbReference type="Ensembl" id="ENST00000512175.3">
    <property type="protein sequence ID" value="ENSP00000456850.1"/>
    <property type="gene ID" value="ENSG00000249693.3"/>
</dbReference>
<dbReference type="GeneID" id="100506564"/>
<dbReference type="KEGG" id="hsa:100506564"/>
<dbReference type="MANE-Select" id="ENST00000512175.3">
    <property type="protein sequence ID" value="ENSP00000456850.1"/>
    <property type="RefSeq nucleotide sequence ID" value="NM_001256475.2"/>
    <property type="RefSeq protein sequence ID" value="NP_001243404.1"/>
</dbReference>
<dbReference type="UCSC" id="uc031seh.2">
    <property type="organism name" value="human"/>
</dbReference>
<dbReference type="AGR" id="HGNC:43771"/>
<dbReference type="CTD" id="100506564"/>
<dbReference type="DisGeNET" id="100506564"/>
<dbReference type="GeneCards" id="SPMAP2L"/>
<dbReference type="HGNC" id="HGNC:43771">
    <property type="gene designation" value="SPMAP2L"/>
</dbReference>
<dbReference type="HPA" id="ENSG00000249693">
    <property type="expression patterns" value="Tissue enriched (testis)"/>
</dbReference>
<dbReference type="neXtProt" id="NX_P0DJG4"/>
<dbReference type="OpenTargets" id="ENSG00000249693"/>
<dbReference type="VEuPathDB" id="HostDB:ENSG00000249693"/>
<dbReference type="eggNOG" id="ENOG502S0I9">
    <property type="taxonomic scope" value="Eukaryota"/>
</dbReference>
<dbReference type="GeneTree" id="ENSGT00940000154630"/>
<dbReference type="HOGENOM" id="CLU_587870_0_0_1"/>
<dbReference type="InParanoid" id="P0DJG4"/>
<dbReference type="OMA" id="DRDAHWP"/>
<dbReference type="PAN-GO" id="P0DJG4">
    <property type="GO annotations" value="0 GO annotations based on evolutionary models"/>
</dbReference>
<dbReference type="PhylomeDB" id="P0DJG4"/>
<dbReference type="TreeFam" id="TF329290"/>
<dbReference type="PathwayCommons" id="P0DJG4"/>
<dbReference type="SignaLink" id="P0DJG4"/>
<dbReference type="BioGRID-ORCS" id="100506564">
    <property type="hits" value="8 hits in 1130 CRISPR screens"/>
</dbReference>
<dbReference type="ChiTaRS" id="THEGL">
    <property type="organism name" value="human"/>
</dbReference>
<dbReference type="Pharos" id="P0DJG4">
    <property type="development level" value="Tdark"/>
</dbReference>
<dbReference type="PRO" id="PR:P0DJG4"/>
<dbReference type="Proteomes" id="UP000005640">
    <property type="component" value="Chromosome 4"/>
</dbReference>
<dbReference type="RNAct" id="P0DJG4">
    <property type="molecule type" value="protein"/>
</dbReference>
<dbReference type="Bgee" id="ENSG00000249693">
    <property type="expression patterns" value="Expressed in male germ line stem cell (sensu Vertebrata) in testis and 49 other cell types or tissues"/>
</dbReference>
<dbReference type="InterPro" id="IPR042401">
    <property type="entry name" value="SPMAP2-like"/>
</dbReference>
<dbReference type="InterPro" id="IPR006623">
    <property type="entry name" value="THEG"/>
</dbReference>
<dbReference type="PANTHER" id="PTHR15901">
    <property type="entry name" value="TESTICULAR HAPLOID EXPRESSED GENE PROTEIN"/>
    <property type="match status" value="1"/>
</dbReference>
<dbReference type="PANTHER" id="PTHR15901:SF15">
    <property type="entry name" value="TESTICULAR HAPLOID EXPRESSED GENE PROTEIN-LIKE"/>
    <property type="match status" value="1"/>
</dbReference>
<dbReference type="Pfam" id="PF14912">
    <property type="entry name" value="THEG"/>
    <property type="match status" value="4"/>
</dbReference>
<dbReference type="SMART" id="SM00705">
    <property type="entry name" value="THEG"/>
    <property type="match status" value="7"/>
</dbReference>